<sequence length="212" mass="23365">MKGLIGRKIGMTRIFTDEGISIPITIIQVEPNIITQVKSIQTDGYYAYQVTTGTKKPNLVIKPEAGHFAKAGTKAGRSLWEFRLKHEEKPINIGEILTLEYFTNIKKVDITGTSKGKGFSGTVKRWNFHMQDASHGNSLSHRVTGSIGQNQTPGKVFKGKKMAGHMGNKRVTIQNLDIIRIDLRKNLLLIKGAIPGAPGNDLIIKPAIKLSH</sequence>
<protein>
    <recommendedName>
        <fullName evidence="1">Large ribosomal subunit protein uL3</fullName>
    </recommendedName>
    <alternativeName>
        <fullName evidence="3">50S ribosomal protein L3</fullName>
    </alternativeName>
</protein>
<name>RL3_BAUCH</name>
<comment type="function">
    <text evidence="1">One of the primary rRNA binding proteins, it binds directly near the 3'-end of the 23S rRNA, where it nucleates assembly of the 50S subunit.</text>
</comment>
<comment type="subunit">
    <text evidence="1">Part of the 50S ribosomal subunit. Forms a cluster with proteins L14 and L19.</text>
</comment>
<comment type="PTM">
    <text evidence="1">Methylated by PrmB.</text>
</comment>
<comment type="similarity">
    <text evidence="1">Belongs to the universal ribosomal protein uL3 family.</text>
</comment>
<evidence type="ECO:0000255" key="1">
    <source>
        <dbReference type="HAMAP-Rule" id="MF_01325"/>
    </source>
</evidence>
<evidence type="ECO:0000256" key="2">
    <source>
        <dbReference type="SAM" id="MobiDB-lite"/>
    </source>
</evidence>
<evidence type="ECO:0000305" key="3"/>
<accession>Q1LTD8</accession>
<reference key="1">
    <citation type="journal article" date="2006" name="PLoS Biol.">
        <title>Metabolic complementarity and genomics of the dual bacterial symbiosis of sharpshooters.</title>
        <authorList>
            <person name="Wu D."/>
            <person name="Daugherty S.C."/>
            <person name="Van Aken S.E."/>
            <person name="Pai G.H."/>
            <person name="Watkins K.L."/>
            <person name="Khouri H."/>
            <person name="Tallon L.J."/>
            <person name="Zaborsky J.M."/>
            <person name="Dunbar H.E."/>
            <person name="Tran P.L."/>
            <person name="Moran N.A."/>
            <person name="Eisen J.A."/>
        </authorList>
    </citation>
    <scope>NUCLEOTIDE SEQUENCE [LARGE SCALE GENOMIC DNA]</scope>
</reference>
<keyword id="KW-0488">Methylation</keyword>
<keyword id="KW-1185">Reference proteome</keyword>
<keyword id="KW-0687">Ribonucleoprotein</keyword>
<keyword id="KW-0689">Ribosomal protein</keyword>
<keyword id="KW-0694">RNA-binding</keyword>
<keyword id="KW-0699">rRNA-binding</keyword>
<feature type="chain" id="PRO_1000052012" description="Large ribosomal subunit protein uL3">
    <location>
        <begin position="1"/>
        <end position="212"/>
    </location>
</feature>
<feature type="region of interest" description="Disordered" evidence="2">
    <location>
        <begin position="139"/>
        <end position="161"/>
    </location>
</feature>
<feature type="compositionally biased region" description="Polar residues" evidence="2">
    <location>
        <begin position="139"/>
        <end position="153"/>
    </location>
</feature>
<feature type="modified residue" description="N5-methylglutamine" evidence="1">
    <location>
        <position position="151"/>
    </location>
</feature>
<dbReference type="EMBL" id="CP000238">
    <property type="protein sequence ID" value="ABF13825.1"/>
    <property type="molecule type" value="Genomic_DNA"/>
</dbReference>
<dbReference type="RefSeq" id="WP_011520509.1">
    <property type="nucleotide sequence ID" value="NC_007984.1"/>
</dbReference>
<dbReference type="SMR" id="Q1LTD8"/>
<dbReference type="STRING" id="374463.BCI_0328"/>
<dbReference type="KEGG" id="bci:BCI_0328"/>
<dbReference type="HOGENOM" id="CLU_044142_4_1_6"/>
<dbReference type="OrthoDB" id="9806135at2"/>
<dbReference type="Proteomes" id="UP000002427">
    <property type="component" value="Chromosome"/>
</dbReference>
<dbReference type="GO" id="GO:0022625">
    <property type="term" value="C:cytosolic large ribosomal subunit"/>
    <property type="evidence" value="ECO:0007669"/>
    <property type="project" value="TreeGrafter"/>
</dbReference>
<dbReference type="GO" id="GO:0019843">
    <property type="term" value="F:rRNA binding"/>
    <property type="evidence" value="ECO:0007669"/>
    <property type="project" value="UniProtKB-UniRule"/>
</dbReference>
<dbReference type="GO" id="GO:0003735">
    <property type="term" value="F:structural constituent of ribosome"/>
    <property type="evidence" value="ECO:0007669"/>
    <property type="project" value="InterPro"/>
</dbReference>
<dbReference type="GO" id="GO:0006412">
    <property type="term" value="P:translation"/>
    <property type="evidence" value="ECO:0007669"/>
    <property type="project" value="UniProtKB-UniRule"/>
</dbReference>
<dbReference type="FunFam" id="2.40.30.10:FF:000004">
    <property type="entry name" value="50S ribosomal protein L3"/>
    <property type="match status" value="1"/>
</dbReference>
<dbReference type="FunFam" id="3.30.160.810:FF:000001">
    <property type="entry name" value="50S ribosomal protein L3"/>
    <property type="match status" value="1"/>
</dbReference>
<dbReference type="Gene3D" id="3.30.160.810">
    <property type="match status" value="1"/>
</dbReference>
<dbReference type="Gene3D" id="2.40.30.10">
    <property type="entry name" value="Translation factors"/>
    <property type="match status" value="1"/>
</dbReference>
<dbReference type="HAMAP" id="MF_01325_B">
    <property type="entry name" value="Ribosomal_uL3_B"/>
    <property type="match status" value="1"/>
</dbReference>
<dbReference type="InterPro" id="IPR000597">
    <property type="entry name" value="Ribosomal_uL3"/>
</dbReference>
<dbReference type="InterPro" id="IPR019927">
    <property type="entry name" value="Ribosomal_uL3_bac/org-type"/>
</dbReference>
<dbReference type="InterPro" id="IPR019926">
    <property type="entry name" value="Ribosomal_uL3_CS"/>
</dbReference>
<dbReference type="InterPro" id="IPR009000">
    <property type="entry name" value="Transl_B-barrel_sf"/>
</dbReference>
<dbReference type="NCBIfam" id="TIGR03625">
    <property type="entry name" value="L3_bact"/>
    <property type="match status" value="1"/>
</dbReference>
<dbReference type="PANTHER" id="PTHR11229">
    <property type="entry name" value="50S RIBOSOMAL PROTEIN L3"/>
    <property type="match status" value="1"/>
</dbReference>
<dbReference type="PANTHER" id="PTHR11229:SF16">
    <property type="entry name" value="LARGE RIBOSOMAL SUBUNIT PROTEIN UL3C"/>
    <property type="match status" value="1"/>
</dbReference>
<dbReference type="Pfam" id="PF00297">
    <property type="entry name" value="Ribosomal_L3"/>
    <property type="match status" value="1"/>
</dbReference>
<dbReference type="SUPFAM" id="SSF50447">
    <property type="entry name" value="Translation proteins"/>
    <property type="match status" value="1"/>
</dbReference>
<dbReference type="PROSITE" id="PS00474">
    <property type="entry name" value="RIBOSOMAL_L3"/>
    <property type="match status" value="1"/>
</dbReference>
<gene>
    <name evidence="1" type="primary">rplC</name>
    <name type="ordered locus">BCI_0328</name>
</gene>
<organism>
    <name type="scientific">Baumannia cicadellinicola subsp. Homalodisca coagulata</name>
    <dbReference type="NCBI Taxonomy" id="374463"/>
    <lineage>
        <taxon>Bacteria</taxon>
        <taxon>Pseudomonadati</taxon>
        <taxon>Pseudomonadota</taxon>
        <taxon>Gammaproteobacteria</taxon>
        <taxon>Candidatus Palibaumannia</taxon>
    </lineage>
</organism>
<proteinExistence type="inferred from homology"/>